<accession>O31577</accession>
<accession>O52962</accession>
<comment type="subcellular location">
    <subcellularLocation>
        <location>Cell membrane</location>
        <topology>Multi-pass membrane protein</topology>
    </subcellularLocation>
</comment>
<comment type="similarity">
    <text evidence="2">Belongs to the major facilitator superfamily.</text>
</comment>
<comment type="sequence caution" evidence="2">
    <conflict type="erroneous initiation">
        <sequence resource="EMBL-CDS" id="BAA24475"/>
    </conflict>
</comment>
<reference key="1">
    <citation type="journal article" date="1996" name="DNA Res.">
        <title>Cloning and sequencing of a 27.8-kb nucleotide sequence of the 79 degrees-81 degrees region of the Bacillus subtilis genome containing the sspE locus.</title>
        <authorList>
            <person name="Yamamoto H."/>
            <person name="Uchiyama S."/>
            <person name="Sekiguchi J."/>
        </authorList>
    </citation>
    <scope>NUCLEOTIDE SEQUENCE [GENOMIC DNA]</scope>
</reference>
<reference key="2">
    <citation type="journal article" date="1997" name="Nature">
        <title>The complete genome sequence of the Gram-positive bacterium Bacillus subtilis.</title>
        <authorList>
            <person name="Kunst F."/>
            <person name="Ogasawara N."/>
            <person name="Moszer I."/>
            <person name="Albertini A.M."/>
            <person name="Alloni G."/>
            <person name="Azevedo V."/>
            <person name="Bertero M.G."/>
            <person name="Bessieres P."/>
            <person name="Bolotin A."/>
            <person name="Borchert S."/>
            <person name="Borriss R."/>
            <person name="Boursier L."/>
            <person name="Brans A."/>
            <person name="Braun M."/>
            <person name="Brignell S.C."/>
            <person name="Bron S."/>
            <person name="Brouillet S."/>
            <person name="Bruschi C.V."/>
            <person name="Caldwell B."/>
            <person name="Capuano V."/>
            <person name="Carter N.M."/>
            <person name="Choi S.-K."/>
            <person name="Codani J.-J."/>
            <person name="Connerton I.F."/>
            <person name="Cummings N.J."/>
            <person name="Daniel R.A."/>
            <person name="Denizot F."/>
            <person name="Devine K.M."/>
            <person name="Duesterhoeft A."/>
            <person name="Ehrlich S.D."/>
            <person name="Emmerson P.T."/>
            <person name="Entian K.-D."/>
            <person name="Errington J."/>
            <person name="Fabret C."/>
            <person name="Ferrari E."/>
            <person name="Foulger D."/>
            <person name="Fritz C."/>
            <person name="Fujita M."/>
            <person name="Fujita Y."/>
            <person name="Fuma S."/>
            <person name="Galizzi A."/>
            <person name="Galleron N."/>
            <person name="Ghim S.-Y."/>
            <person name="Glaser P."/>
            <person name="Goffeau A."/>
            <person name="Golightly E.J."/>
            <person name="Grandi G."/>
            <person name="Guiseppi G."/>
            <person name="Guy B.J."/>
            <person name="Haga K."/>
            <person name="Haiech J."/>
            <person name="Harwood C.R."/>
            <person name="Henaut A."/>
            <person name="Hilbert H."/>
            <person name="Holsappel S."/>
            <person name="Hosono S."/>
            <person name="Hullo M.-F."/>
            <person name="Itaya M."/>
            <person name="Jones L.-M."/>
            <person name="Joris B."/>
            <person name="Karamata D."/>
            <person name="Kasahara Y."/>
            <person name="Klaerr-Blanchard M."/>
            <person name="Klein C."/>
            <person name="Kobayashi Y."/>
            <person name="Koetter P."/>
            <person name="Koningstein G."/>
            <person name="Krogh S."/>
            <person name="Kumano M."/>
            <person name="Kurita K."/>
            <person name="Lapidus A."/>
            <person name="Lardinois S."/>
            <person name="Lauber J."/>
            <person name="Lazarevic V."/>
            <person name="Lee S.-M."/>
            <person name="Levine A."/>
            <person name="Liu H."/>
            <person name="Masuda S."/>
            <person name="Mauel C."/>
            <person name="Medigue C."/>
            <person name="Medina N."/>
            <person name="Mellado R.P."/>
            <person name="Mizuno M."/>
            <person name="Moestl D."/>
            <person name="Nakai S."/>
            <person name="Noback M."/>
            <person name="Noone D."/>
            <person name="O'Reilly M."/>
            <person name="Ogawa K."/>
            <person name="Ogiwara A."/>
            <person name="Oudega B."/>
            <person name="Park S.-H."/>
            <person name="Parro V."/>
            <person name="Pohl T.M."/>
            <person name="Portetelle D."/>
            <person name="Porwollik S."/>
            <person name="Prescott A.M."/>
            <person name="Presecan E."/>
            <person name="Pujic P."/>
            <person name="Purnelle B."/>
            <person name="Rapoport G."/>
            <person name="Rey M."/>
            <person name="Reynolds S."/>
            <person name="Rieger M."/>
            <person name="Rivolta C."/>
            <person name="Rocha E."/>
            <person name="Roche B."/>
            <person name="Rose M."/>
            <person name="Sadaie Y."/>
            <person name="Sato T."/>
            <person name="Scanlan E."/>
            <person name="Schleich S."/>
            <person name="Schroeter R."/>
            <person name="Scoffone F."/>
            <person name="Sekiguchi J."/>
            <person name="Sekowska A."/>
            <person name="Seror S.J."/>
            <person name="Serror P."/>
            <person name="Shin B.-S."/>
            <person name="Soldo B."/>
            <person name="Sorokin A."/>
            <person name="Tacconi E."/>
            <person name="Takagi T."/>
            <person name="Takahashi H."/>
            <person name="Takemaru K."/>
            <person name="Takeuchi M."/>
            <person name="Tamakoshi A."/>
            <person name="Tanaka T."/>
            <person name="Terpstra P."/>
            <person name="Tognoni A."/>
            <person name="Tosato V."/>
            <person name="Uchiyama S."/>
            <person name="Vandenbol M."/>
            <person name="Vannier F."/>
            <person name="Vassarotti A."/>
            <person name="Viari A."/>
            <person name="Wambutt R."/>
            <person name="Wedler E."/>
            <person name="Wedler H."/>
            <person name="Weitzenegger T."/>
            <person name="Winters P."/>
            <person name="Wipat A."/>
            <person name="Yamamoto H."/>
            <person name="Yamane K."/>
            <person name="Yasumoto K."/>
            <person name="Yata K."/>
            <person name="Yoshida K."/>
            <person name="Yoshikawa H.-F."/>
            <person name="Zumstein E."/>
            <person name="Yoshikawa H."/>
            <person name="Danchin A."/>
        </authorList>
    </citation>
    <scope>NUCLEOTIDE SEQUENCE [LARGE SCALE GENOMIC DNA]</scope>
    <source>
        <strain>168</strain>
    </source>
</reference>
<dbReference type="EMBL" id="D85082">
    <property type="protein sequence ID" value="BAA24475.1"/>
    <property type="status" value="ALT_INIT"/>
    <property type="molecule type" value="Genomic_DNA"/>
</dbReference>
<dbReference type="EMBL" id="AL009126">
    <property type="protein sequence ID" value="CAB12683.1"/>
    <property type="molecule type" value="Genomic_DNA"/>
</dbReference>
<dbReference type="PIR" id="B69801">
    <property type="entry name" value="B69801"/>
</dbReference>
<dbReference type="RefSeq" id="NP_388735.1">
    <property type="nucleotide sequence ID" value="NC_000964.3"/>
</dbReference>
<dbReference type="RefSeq" id="WP_003243500.1">
    <property type="nucleotide sequence ID" value="NZ_OZ025638.1"/>
</dbReference>
<dbReference type="SMR" id="O31577"/>
<dbReference type="FunCoup" id="O31577">
    <property type="interactions" value="304"/>
</dbReference>
<dbReference type="STRING" id="224308.BSU08540"/>
<dbReference type="PaxDb" id="224308-BSU08540"/>
<dbReference type="EnsemblBacteria" id="CAB12683">
    <property type="protein sequence ID" value="CAB12683"/>
    <property type="gene ID" value="BSU_08540"/>
</dbReference>
<dbReference type="GeneID" id="939712"/>
<dbReference type="KEGG" id="bsu:BSU08540"/>
<dbReference type="PATRIC" id="fig|224308.43.peg.893"/>
<dbReference type="eggNOG" id="COG2814">
    <property type="taxonomic scope" value="Bacteria"/>
</dbReference>
<dbReference type="InParanoid" id="O31577"/>
<dbReference type="OrthoDB" id="9788453at2"/>
<dbReference type="PhylomeDB" id="O31577"/>
<dbReference type="BioCyc" id="BSUB:BSU08540-MONOMER"/>
<dbReference type="Proteomes" id="UP000001570">
    <property type="component" value="Chromosome"/>
</dbReference>
<dbReference type="GO" id="GO:0005886">
    <property type="term" value="C:plasma membrane"/>
    <property type="evidence" value="ECO:0000318"/>
    <property type="project" value="GO_Central"/>
</dbReference>
<dbReference type="GO" id="GO:0022857">
    <property type="term" value="F:transmembrane transporter activity"/>
    <property type="evidence" value="ECO:0000318"/>
    <property type="project" value="GO_Central"/>
</dbReference>
<dbReference type="GO" id="GO:0055085">
    <property type="term" value="P:transmembrane transport"/>
    <property type="evidence" value="ECO:0000318"/>
    <property type="project" value="GO_Central"/>
</dbReference>
<dbReference type="CDD" id="cd17324">
    <property type="entry name" value="MFS_NepI_like"/>
    <property type="match status" value="1"/>
</dbReference>
<dbReference type="Gene3D" id="1.20.1250.20">
    <property type="entry name" value="MFS general substrate transporter like domains"/>
    <property type="match status" value="1"/>
</dbReference>
<dbReference type="InterPro" id="IPR011701">
    <property type="entry name" value="MFS"/>
</dbReference>
<dbReference type="InterPro" id="IPR020846">
    <property type="entry name" value="MFS_dom"/>
</dbReference>
<dbReference type="InterPro" id="IPR050189">
    <property type="entry name" value="MFS_Efflux_Transporters"/>
</dbReference>
<dbReference type="InterPro" id="IPR036259">
    <property type="entry name" value="MFS_trans_sf"/>
</dbReference>
<dbReference type="PANTHER" id="PTHR43124:SF3">
    <property type="entry name" value="CHLORAMPHENICOL EFFLUX PUMP RV0191"/>
    <property type="match status" value="1"/>
</dbReference>
<dbReference type="PANTHER" id="PTHR43124">
    <property type="entry name" value="PURINE EFFLUX PUMP PBUE"/>
    <property type="match status" value="1"/>
</dbReference>
<dbReference type="Pfam" id="PF07690">
    <property type="entry name" value="MFS_1"/>
    <property type="match status" value="1"/>
</dbReference>
<dbReference type="SUPFAM" id="SSF103473">
    <property type="entry name" value="MFS general substrate transporter"/>
    <property type="match status" value="1"/>
</dbReference>
<dbReference type="PROSITE" id="PS50850">
    <property type="entry name" value="MFS"/>
    <property type="match status" value="1"/>
</dbReference>
<sequence>MSIKNPSVKFIIFVLMICTFSIGYTEYAVMGILTSIANDFHIQVSSAGLLVTAYAASVCLTGPLVTIISVKLPRKPVLLGLMAIFILSNLMSALAPNFAVLAISRILSASIHGAFFAIAMVFASEMVPPEKRAAAAASMNGGLTVALMLGVPFGSYLGDVLNWRAVFSIITALGVIGFLGLMAAVPNRKPKVIPMLMNEWGVFKHKQVLFSFAITILGYSGVFIAYTFIEPILRHSAGFSTVGITGALFAYGLGGVAGNFFAGKVPLPLLTRTMIGVMIGLIGVLAVFPYIAIYPAAAIVATFLFGACAFGTPPLLQTKVISSSEGGTTIAAAVSVSAFNLANALGAWIGGMILNGTGSYSWLFAGGALMTACGLVLSTFAHLSEKKSVYEYQVNKG</sequence>
<gene>
    <name type="primary">yfhI</name>
    <name type="ordered locus">BSU08540</name>
</gene>
<proteinExistence type="inferred from homology"/>
<feature type="chain" id="PRO_0000349880" description="Uncharacterized MFS-type transporter YfhI">
    <location>
        <begin position="1"/>
        <end position="397"/>
    </location>
</feature>
<feature type="transmembrane region" description="Helical" evidence="1">
    <location>
        <begin position="10"/>
        <end position="30"/>
    </location>
</feature>
<feature type="transmembrane region" description="Helical" evidence="1">
    <location>
        <begin position="48"/>
        <end position="68"/>
    </location>
</feature>
<feature type="transmembrane region" description="Helical" evidence="1">
    <location>
        <begin position="76"/>
        <end position="96"/>
    </location>
</feature>
<feature type="transmembrane region" description="Helical" evidence="1">
    <location>
        <begin position="106"/>
        <end position="126"/>
    </location>
</feature>
<feature type="transmembrane region" description="Helical" evidence="1">
    <location>
        <begin position="141"/>
        <end position="161"/>
    </location>
</feature>
<feature type="transmembrane region" description="Helical" evidence="1">
    <location>
        <begin position="165"/>
        <end position="185"/>
    </location>
</feature>
<feature type="transmembrane region" description="Helical" evidence="1">
    <location>
        <begin position="209"/>
        <end position="229"/>
    </location>
</feature>
<feature type="transmembrane region" description="Helical" evidence="1">
    <location>
        <begin position="242"/>
        <end position="262"/>
    </location>
</feature>
<feature type="transmembrane region" description="Helical" evidence="1">
    <location>
        <begin position="274"/>
        <end position="294"/>
    </location>
</feature>
<feature type="transmembrane region" description="Helical" evidence="1">
    <location>
        <begin position="296"/>
        <end position="316"/>
    </location>
</feature>
<feature type="transmembrane region" description="Helical" evidence="1">
    <location>
        <begin position="334"/>
        <end position="354"/>
    </location>
</feature>
<feature type="transmembrane region" description="Helical" evidence="1">
    <location>
        <begin position="363"/>
        <end position="383"/>
    </location>
</feature>
<organism>
    <name type="scientific">Bacillus subtilis (strain 168)</name>
    <dbReference type="NCBI Taxonomy" id="224308"/>
    <lineage>
        <taxon>Bacteria</taxon>
        <taxon>Bacillati</taxon>
        <taxon>Bacillota</taxon>
        <taxon>Bacilli</taxon>
        <taxon>Bacillales</taxon>
        <taxon>Bacillaceae</taxon>
        <taxon>Bacillus</taxon>
    </lineage>
</organism>
<name>YFHI_BACSU</name>
<evidence type="ECO:0000255" key="1"/>
<evidence type="ECO:0000305" key="2"/>
<keyword id="KW-1003">Cell membrane</keyword>
<keyword id="KW-0472">Membrane</keyword>
<keyword id="KW-1185">Reference proteome</keyword>
<keyword id="KW-0812">Transmembrane</keyword>
<keyword id="KW-1133">Transmembrane helix</keyword>
<keyword id="KW-0813">Transport</keyword>
<protein>
    <recommendedName>
        <fullName>Uncharacterized MFS-type transporter YfhI</fullName>
    </recommendedName>
</protein>